<reference key="1">
    <citation type="submission" date="2002-05" db="EMBL/GenBank/DDBJ databases">
        <title>Endocrine pancreas consortium.</title>
        <authorList>
            <person name="Melton D."/>
            <person name="Brown J."/>
            <person name="Kenty G."/>
            <person name="Permutt A."/>
            <person name="Lee C."/>
            <person name="Kaestner K."/>
            <person name="Lemishka I."/>
            <person name="Scearce M."/>
            <person name="Brestelli J."/>
            <person name="Gradwohl G."/>
            <person name="Clifton S."/>
            <person name="Hillier L."/>
            <person name="Marra M."/>
            <person name="Pape D."/>
            <person name="Wylie T."/>
            <person name="Martin J."/>
            <person name="Blistain A."/>
            <person name="Schmitt A."/>
            <person name="Theising B."/>
            <person name="Ritter E."/>
            <person name="Ronko I."/>
            <person name="Bennett J."/>
            <person name="Cardenas M."/>
            <person name="Gibbons M."/>
            <person name="McCann R."/>
            <person name="Cole R."/>
            <person name="Tsagareishvili R."/>
            <person name="Williams T."/>
            <person name="Jackson Y."/>
            <person name="Bowers Y."/>
        </authorList>
    </citation>
    <scope>NUCLEOTIDE SEQUENCE [MRNA] (ISOFORM 1)</scope>
    <source>
        <tissue>Pancreatic islet</tissue>
    </source>
</reference>
<reference key="2">
    <citation type="journal article" date="2004" name="Nature">
        <title>The DNA sequence and comparative analysis of human chromosome 5.</title>
        <authorList>
            <person name="Schmutz J."/>
            <person name="Martin J."/>
            <person name="Terry A."/>
            <person name="Couronne O."/>
            <person name="Grimwood J."/>
            <person name="Lowry S."/>
            <person name="Gordon L.A."/>
            <person name="Scott D."/>
            <person name="Xie G."/>
            <person name="Huang W."/>
            <person name="Hellsten U."/>
            <person name="Tran-Gyamfi M."/>
            <person name="She X."/>
            <person name="Prabhakar S."/>
            <person name="Aerts A."/>
            <person name="Altherr M."/>
            <person name="Bajorek E."/>
            <person name="Black S."/>
            <person name="Branscomb E."/>
            <person name="Caoile C."/>
            <person name="Challacombe J.F."/>
            <person name="Chan Y.M."/>
            <person name="Denys M."/>
            <person name="Detter J.C."/>
            <person name="Escobar J."/>
            <person name="Flowers D."/>
            <person name="Fotopulos D."/>
            <person name="Glavina T."/>
            <person name="Gomez M."/>
            <person name="Gonzales E."/>
            <person name="Goodstein D."/>
            <person name="Grigoriev I."/>
            <person name="Groza M."/>
            <person name="Hammon N."/>
            <person name="Hawkins T."/>
            <person name="Haydu L."/>
            <person name="Israni S."/>
            <person name="Jett J."/>
            <person name="Kadner K."/>
            <person name="Kimball H."/>
            <person name="Kobayashi A."/>
            <person name="Lopez F."/>
            <person name="Lou Y."/>
            <person name="Martinez D."/>
            <person name="Medina C."/>
            <person name="Morgan J."/>
            <person name="Nandkeshwar R."/>
            <person name="Noonan J.P."/>
            <person name="Pitluck S."/>
            <person name="Pollard M."/>
            <person name="Predki P."/>
            <person name="Priest J."/>
            <person name="Ramirez L."/>
            <person name="Retterer J."/>
            <person name="Rodriguez A."/>
            <person name="Rogers S."/>
            <person name="Salamov A."/>
            <person name="Salazar A."/>
            <person name="Thayer N."/>
            <person name="Tice H."/>
            <person name="Tsai M."/>
            <person name="Ustaszewska A."/>
            <person name="Vo N."/>
            <person name="Wheeler J."/>
            <person name="Wu K."/>
            <person name="Yang J."/>
            <person name="Dickson M."/>
            <person name="Cheng J.-F."/>
            <person name="Eichler E.E."/>
            <person name="Olsen A."/>
            <person name="Pennacchio L.A."/>
            <person name="Rokhsar D.S."/>
            <person name="Richardson P."/>
            <person name="Lucas S.M."/>
            <person name="Myers R.M."/>
            <person name="Rubin E.M."/>
        </authorList>
    </citation>
    <scope>NUCLEOTIDE SEQUENCE [LARGE SCALE GENOMIC DNA]</scope>
</reference>
<dbReference type="EMBL" id="BQ269742">
    <property type="status" value="NOT_ANNOTATED_CDS"/>
    <property type="molecule type" value="mRNA"/>
</dbReference>
<dbReference type="EMBL" id="AC004507">
    <property type="status" value="NOT_ANNOTATED_CDS"/>
    <property type="molecule type" value="Genomic_DNA"/>
</dbReference>
<dbReference type="EMBL" id="AC005915">
    <property type="status" value="NOT_ANNOTATED_CDS"/>
    <property type="molecule type" value="Genomic_DNA"/>
</dbReference>
<dbReference type="CCDS" id="CCDS54895.1">
    <molecule id="A6NC05-1"/>
</dbReference>
<dbReference type="CCDS" id="CCDS54896.1">
    <molecule id="A6NC05-2"/>
</dbReference>
<dbReference type="RefSeq" id="NP_001157950.1">
    <molecule id="A6NC05-2"/>
    <property type="nucleotide sequence ID" value="NM_001164478.2"/>
</dbReference>
<dbReference type="RefSeq" id="NP_001157951.1">
    <molecule id="A6NC05-1"/>
    <property type="nucleotide sequence ID" value="NM_001164479.2"/>
</dbReference>
<dbReference type="SMR" id="A6NC05"/>
<dbReference type="BioGRID" id="134974">
    <property type="interactions" value="1"/>
</dbReference>
<dbReference type="IntAct" id="A6NC05">
    <property type="interactions" value="1"/>
</dbReference>
<dbReference type="MINT" id="A6NC05"/>
<dbReference type="STRING" id="9606.ENSP00000454153"/>
<dbReference type="iPTMnet" id="A6NC05"/>
<dbReference type="PhosphoSitePlus" id="A6NC05"/>
<dbReference type="BioMuta" id="C5orf63"/>
<dbReference type="MassIVE" id="A6NC05"/>
<dbReference type="PaxDb" id="9606-ENSP00000454153"/>
<dbReference type="PeptideAtlas" id="A6NC05"/>
<dbReference type="ProteomicsDB" id="33428"/>
<dbReference type="ProteomicsDB" id="794">
    <molecule id="A6NC05-1"/>
</dbReference>
<dbReference type="Antibodypedia" id="76266">
    <property type="antibodies" value="5 antibodies from 5 providers"/>
</dbReference>
<dbReference type="DNASU" id="401207"/>
<dbReference type="Ensembl" id="ENST00000296662.10">
    <molecule id="A6NC05-2"/>
    <property type="protein sequence ID" value="ENSP00000453964.1"/>
    <property type="gene ID" value="ENSG00000164241.14"/>
</dbReference>
<dbReference type="Ensembl" id="ENST00000535381.6">
    <molecule id="A6NC05-1"/>
    <property type="protein sequence ID" value="ENSP00000454153.1"/>
    <property type="gene ID" value="ENSG00000164241.14"/>
</dbReference>
<dbReference type="GeneID" id="401207"/>
<dbReference type="KEGG" id="hsa:401207"/>
<dbReference type="MANE-Select" id="ENST00000296662.10">
    <molecule id="A6NC05-2"/>
    <property type="protein sequence ID" value="ENSP00000453964.1"/>
    <property type="RefSeq nucleotide sequence ID" value="NM_001164478.2"/>
    <property type="RefSeq protein sequence ID" value="NP_001157950.1"/>
</dbReference>
<dbReference type="UCSC" id="uc021ydb.1">
    <molecule id="A6NC05-1"/>
    <property type="organism name" value="human"/>
</dbReference>
<dbReference type="AGR" id="HGNC:40051"/>
<dbReference type="CTD" id="401207"/>
<dbReference type="DisGeNET" id="401207"/>
<dbReference type="GeneCards" id="C5orf63"/>
<dbReference type="HGNC" id="HGNC:40051">
    <property type="gene designation" value="C5orf63"/>
</dbReference>
<dbReference type="HPA" id="ENSG00000164241">
    <property type="expression patterns" value="Low tissue specificity"/>
</dbReference>
<dbReference type="neXtProt" id="NX_A6NC05"/>
<dbReference type="OpenTargets" id="ENSG00000164241"/>
<dbReference type="VEuPathDB" id="HostDB:ENSG00000164241"/>
<dbReference type="eggNOG" id="ENOG502S4BD">
    <property type="taxonomic scope" value="Eukaryota"/>
</dbReference>
<dbReference type="GeneTree" id="ENSGT00390000014940"/>
<dbReference type="HOGENOM" id="CLU_1854541_0_0_1"/>
<dbReference type="InParanoid" id="A6NC05"/>
<dbReference type="OMA" id="WYERYQF"/>
<dbReference type="OrthoDB" id="429967at2759"/>
<dbReference type="PAN-GO" id="A6NC05">
    <property type="GO annotations" value="0 GO annotations based on evolutionary models"/>
</dbReference>
<dbReference type="PhylomeDB" id="A6NC05"/>
<dbReference type="PathwayCommons" id="A6NC05"/>
<dbReference type="BioGRID-ORCS" id="401207">
    <property type="hits" value="9 hits in 1107 CRISPR screens"/>
</dbReference>
<dbReference type="ChiTaRS" id="C5orf63">
    <property type="organism name" value="human"/>
</dbReference>
<dbReference type="GenomeRNAi" id="401207"/>
<dbReference type="Pharos" id="A6NC05">
    <property type="development level" value="Tdark"/>
</dbReference>
<dbReference type="PRO" id="PR:A6NC05"/>
<dbReference type="Proteomes" id="UP000005640">
    <property type="component" value="Chromosome 5"/>
</dbReference>
<dbReference type="RNAct" id="A6NC05">
    <property type="molecule type" value="protein"/>
</dbReference>
<dbReference type="Bgee" id="ENSG00000164241">
    <property type="expression patterns" value="Expressed in tendon of biceps brachii and 160 other cell types or tissues"/>
</dbReference>
<dbReference type="ExpressionAtlas" id="A6NC05">
    <property type="expression patterns" value="baseline and differential"/>
</dbReference>
<dbReference type="Gene3D" id="3.40.30.10">
    <property type="entry name" value="Glutaredoxin"/>
    <property type="match status" value="1"/>
</dbReference>
<dbReference type="InterPro" id="IPR008554">
    <property type="entry name" value="Glutaredoxin-like"/>
</dbReference>
<dbReference type="InterPro" id="IPR052565">
    <property type="entry name" value="Glutaredoxin-like_YDR286C"/>
</dbReference>
<dbReference type="InterPro" id="IPR036249">
    <property type="entry name" value="Thioredoxin-like_sf"/>
</dbReference>
<dbReference type="PANTHER" id="PTHR33558:SF2">
    <property type="entry name" value="GLUTAREDOXIN-LIKE PROTEIN C5ORF63"/>
    <property type="match status" value="1"/>
</dbReference>
<dbReference type="PANTHER" id="PTHR33558">
    <property type="entry name" value="GLUTAREDOXIN-LIKE PROTEIN C5ORF63 HOMOLOG"/>
    <property type="match status" value="1"/>
</dbReference>
<dbReference type="Pfam" id="PF05768">
    <property type="entry name" value="Glrx-like"/>
    <property type="match status" value="1"/>
</dbReference>
<dbReference type="SUPFAM" id="SSF52833">
    <property type="entry name" value="Thioredoxin-like"/>
    <property type="match status" value="1"/>
</dbReference>
<comment type="alternative products">
    <event type="alternative splicing"/>
    <isoform>
        <id>A6NC05-1</id>
        <name>1</name>
        <sequence type="displayed"/>
    </isoform>
    <isoform>
        <id>A6NC05-2</id>
        <name>2</name>
        <sequence type="described" ref="VSP_044904"/>
    </isoform>
</comment>
<comment type="similarity">
    <text evidence="3">Belongs to the glutaredoxin family. YDR286C subfamily.</text>
</comment>
<proteinExistence type="evidence at protein level"/>
<protein>
    <recommendedName>
        <fullName>Glutaredoxin-like protein C5orf63</fullName>
    </recommendedName>
</protein>
<name>YD286_HUMAN</name>
<gene>
    <name type="primary">C5orf63</name>
</gene>
<sequence length="138" mass="15764">MLWFQGNSMQLARSSFGLFLRNCSASKTTLPVLTLFTKDPCPLCDEAKEVLKPYENRQPYKDQKLPGTRRRRSPSSPSHPHMASQSGKRYNLTLNQVLSFDYDMGLDAPKTISSDCGAFYCLRMFKSPDMTCCFYPKQ</sequence>
<feature type="chain" id="PRO_0000328756" description="Glutaredoxin-like protein C5orf63">
    <location>
        <begin position="1"/>
        <end position="138"/>
    </location>
</feature>
<feature type="region of interest" description="Disordered" evidence="2">
    <location>
        <begin position="55"/>
        <end position="88"/>
    </location>
</feature>
<feature type="compositionally biased region" description="Basic and acidic residues" evidence="2">
    <location>
        <begin position="55"/>
        <end position="64"/>
    </location>
</feature>
<feature type="disulfide bond" description="Redox-active" evidence="1">
    <location>
        <begin position="41"/>
        <end position="44"/>
    </location>
</feature>
<feature type="splice variant" id="VSP_044904" description="In isoform 2." evidence="3">
    <original>QPYKDQKLPGTRRRRSPSSPSHPHMASQSGKRYNLTLNQVLSFDYDMGLDAPKTISSDCGAFYCLRMFKSPDMTCCFYPKQ</original>
    <variation>FILQEVNITLPENSVWYERYKFDIPVFHLNGQFLMMHRVNTSKLEKQLLKLEQQSTGG</variation>
    <location>
        <begin position="58"/>
        <end position="138"/>
    </location>
</feature>
<evidence type="ECO:0000250" key="1"/>
<evidence type="ECO:0000256" key="2">
    <source>
        <dbReference type="SAM" id="MobiDB-lite"/>
    </source>
</evidence>
<evidence type="ECO:0000305" key="3"/>
<accession>A6NC05</accession>
<accession>G3V557</accession>
<organism>
    <name type="scientific">Homo sapiens</name>
    <name type="common">Human</name>
    <dbReference type="NCBI Taxonomy" id="9606"/>
    <lineage>
        <taxon>Eukaryota</taxon>
        <taxon>Metazoa</taxon>
        <taxon>Chordata</taxon>
        <taxon>Craniata</taxon>
        <taxon>Vertebrata</taxon>
        <taxon>Euteleostomi</taxon>
        <taxon>Mammalia</taxon>
        <taxon>Eutheria</taxon>
        <taxon>Euarchontoglires</taxon>
        <taxon>Primates</taxon>
        <taxon>Haplorrhini</taxon>
        <taxon>Catarrhini</taxon>
        <taxon>Hominidae</taxon>
        <taxon>Homo</taxon>
    </lineage>
</organism>
<keyword id="KW-0025">Alternative splicing</keyword>
<keyword id="KW-1015">Disulfide bond</keyword>
<keyword id="KW-0249">Electron transport</keyword>
<keyword id="KW-1267">Proteomics identification</keyword>
<keyword id="KW-1185">Reference proteome</keyword>
<keyword id="KW-0813">Transport</keyword>